<accession>Q5R9W2</accession>
<keyword id="KW-0007">Acetylation</keyword>
<keyword id="KW-0963">Cytoplasm</keyword>
<keyword id="KW-0479">Metal-binding</keyword>
<keyword id="KW-0597">Phosphoprotein</keyword>
<keyword id="KW-1185">Reference proteome</keyword>
<keyword id="KW-0808">Transferase</keyword>
<keyword id="KW-0833">Ubl conjugation pathway</keyword>
<keyword id="KW-0862">Zinc</keyword>
<keyword id="KW-0863">Zinc-finger</keyword>
<sequence>MESKPSRIPRGISVQPSSSLSARMMSGSRGSSLNDTYHSRDSSFRLDSEYQSTSASASASPFQSAWYSESEITQGARSRSQNQQRDHDSKRPKLSCTNCTTSAGRNVGNGLNTLSDSSWRHSQVPRSSSMVLGSFGTDLMRERRDLERRTDSSISNLMDYSHRSGDFTTSSYVQDRVPSYSQGARPKENSMSTLQLNTSSTNHQLPSEHQTILSSRDSRSSLRSNFSSRESESSRSNTQPGFSYSSSRDEAPIISNSERVVSSQRPFQESSDNEGRRTTRRLLSRIASSMSSTFFSRRSSQDSLNTRSLSSENSYVSPRILTASQSRSNVPSTSEVPDNRASEASQGFRFLRRRWGLSSLSHNHSSESDSENFNQESESRNTGPWLSSSLRNRCTPLFSRRRREGRDESSRIPTSDTSSRSHIFRRESNEVVHLEAQNDPLGAAANRPQASAASSSATTGGSTSDSAQGGRNTGIAGILPGSLFRFAVPPALGSNLTDNVMITVDIIPSGWNSADGKSDKTKSAPSRDPERLQKIKESLLLEDSEEEEGDLCRICQMAAASSSNLLIEPCKCTGSLQYVHQDCMKKWLQAKINSGSSLEAVTTCELCKEKLELNLEDFDIHELHRAHANEQAEYEFISSGLYLVVLLHLCEQSFSDMMGNTNEPSTRVRFINLARTLQAHMEDLETSEDDSEEDGDHNRTFDIAYFI</sequence>
<evidence type="ECO:0000250" key="1">
    <source>
        <dbReference type="UniProtKB" id="Q9H992"/>
    </source>
</evidence>
<evidence type="ECO:0000250" key="2">
    <source>
        <dbReference type="UniProtKB" id="Q9WV66"/>
    </source>
</evidence>
<evidence type="ECO:0000255" key="3">
    <source>
        <dbReference type="PROSITE-ProRule" id="PRU00623"/>
    </source>
</evidence>
<evidence type="ECO:0000256" key="4">
    <source>
        <dbReference type="SAM" id="MobiDB-lite"/>
    </source>
</evidence>
<evidence type="ECO:0000305" key="5"/>
<dbReference type="EC" id="2.3.2.27"/>
<dbReference type="EMBL" id="CR859270">
    <property type="protein sequence ID" value="CAH91448.1"/>
    <property type="molecule type" value="mRNA"/>
</dbReference>
<dbReference type="RefSeq" id="NP_001127420.1">
    <property type="nucleotide sequence ID" value="NM_001133948.1"/>
</dbReference>
<dbReference type="SMR" id="Q5R9W2"/>
<dbReference type="FunCoup" id="Q5R9W2">
    <property type="interactions" value="3861"/>
</dbReference>
<dbReference type="STRING" id="9601.ENSPPYP00000014365"/>
<dbReference type="GeneID" id="100174490"/>
<dbReference type="KEGG" id="pon:100174490"/>
<dbReference type="CTD" id="64844"/>
<dbReference type="eggNOG" id="KOG1609">
    <property type="taxonomic scope" value="Eukaryota"/>
</dbReference>
<dbReference type="InParanoid" id="Q5R9W2"/>
<dbReference type="OrthoDB" id="2154780at2759"/>
<dbReference type="UniPathway" id="UPA00143"/>
<dbReference type="Proteomes" id="UP000001595">
    <property type="component" value="Unplaced"/>
</dbReference>
<dbReference type="GO" id="GO:0005829">
    <property type="term" value="C:cytosol"/>
    <property type="evidence" value="ECO:0000250"/>
    <property type="project" value="UniProtKB"/>
</dbReference>
<dbReference type="GO" id="GO:0005634">
    <property type="term" value="C:nucleus"/>
    <property type="evidence" value="ECO:0000250"/>
    <property type="project" value="UniProtKB"/>
</dbReference>
<dbReference type="GO" id="GO:0005886">
    <property type="term" value="C:plasma membrane"/>
    <property type="evidence" value="ECO:0000250"/>
    <property type="project" value="UniProtKB"/>
</dbReference>
<dbReference type="GO" id="GO:0016740">
    <property type="term" value="F:transferase activity"/>
    <property type="evidence" value="ECO:0007669"/>
    <property type="project" value="UniProtKB-KW"/>
</dbReference>
<dbReference type="GO" id="GO:0043130">
    <property type="term" value="F:ubiquitin binding"/>
    <property type="evidence" value="ECO:0000250"/>
    <property type="project" value="UniProtKB"/>
</dbReference>
<dbReference type="GO" id="GO:0031624">
    <property type="term" value="F:ubiquitin conjugating enzyme binding"/>
    <property type="evidence" value="ECO:0007669"/>
    <property type="project" value="TreeGrafter"/>
</dbReference>
<dbReference type="GO" id="GO:0008270">
    <property type="term" value="F:zinc ion binding"/>
    <property type="evidence" value="ECO:0007669"/>
    <property type="project" value="UniProtKB-KW"/>
</dbReference>
<dbReference type="GO" id="GO:0043518">
    <property type="term" value="P:negative regulation of DNA damage response, signal transduction by p53 class mediator"/>
    <property type="evidence" value="ECO:0000250"/>
    <property type="project" value="UniProtKB"/>
</dbReference>
<dbReference type="GO" id="GO:1902166">
    <property type="term" value="P:negative regulation of intrinsic apoptotic signaling pathway in response to DNA damage by p53 class mediator"/>
    <property type="evidence" value="ECO:0000250"/>
    <property type="project" value="UniProtKB"/>
</dbReference>
<dbReference type="GO" id="GO:1901799">
    <property type="term" value="P:negative regulation of proteasomal protein catabolic process"/>
    <property type="evidence" value="ECO:0000250"/>
    <property type="project" value="UniProtKB"/>
</dbReference>
<dbReference type="GO" id="GO:1905524">
    <property type="term" value="P:negative regulation of protein autoubiquitination"/>
    <property type="evidence" value="ECO:0000250"/>
    <property type="project" value="UniProtKB"/>
</dbReference>
<dbReference type="GO" id="GO:0008284">
    <property type="term" value="P:positive regulation of cell population proliferation"/>
    <property type="evidence" value="ECO:0000250"/>
    <property type="project" value="UniProtKB"/>
</dbReference>
<dbReference type="GO" id="GO:1902916">
    <property type="term" value="P:positive regulation of protein polyubiquitination"/>
    <property type="evidence" value="ECO:0000250"/>
    <property type="project" value="UniProtKB"/>
</dbReference>
<dbReference type="GO" id="GO:0051865">
    <property type="term" value="P:protein autoubiquitination"/>
    <property type="evidence" value="ECO:0000250"/>
    <property type="project" value="UniProtKB"/>
</dbReference>
<dbReference type="GO" id="GO:0050821">
    <property type="term" value="P:protein stabilization"/>
    <property type="evidence" value="ECO:0000250"/>
    <property type="project" value="UniProtKB"/>
</dbReference>
<dbReference type="CDD" id="cd16812">
    <property type="entry name" value="RING_CH-C4HC3_MARCH7"/>
    <property type="match status" value="1"/>
</dbReference>
<dbReference type="FunFam" id="3.30.40.10:FF:000108">
    <property type="entry name" value="E3 ubiquitin-protein ligase MARCH7 isoform X1"/>
    <property type="match status" value="1"/>
</dbReference>
<dbReference type="Gene3D" id="3.30.40.10">
    <property type="entry name" value="Zinc/RING finger domain, C3HC4 (zinc finger)"/>
    <property type="match status" value="1"/>
</dbReference>
<dbReference type="InterPro" id="IPR052297">
    <property type="entry name" value="RING-CH-type_E3_ubiq-ligase"/>
</dbReference>
<dbReference type="InterPro" id="IPR011016">
    <property type="entry name" value="Znf_RING-CH"/>
</dbReference>
<dbReference type="InterPro" id="IPR013083">
    <property type="entry name" value="Znf_RING/FYVE/PHD"/>
</dbReference>
<dbReference type="PANTHER" id="PTHR14471:SF1">
    <property type="entry name" value="E3 UBIQUITIN-PROTEIN LIGASE MARCHF7"/>
    <property type="match status" value="1"/>
</dbReference>
<dbReference type="PANTHER" id="PTHR14471">
    <property type="entry name" value="MARCH7/10 E3 UBIQUITIN PROTEIN LIGASE FAMILY MEMBER"/>
    <property type="match status" value="1"/>
</dbReference>
<dbReference type="Pfam" id="PF12906">
    <property type="entry name" value="RINGv"/>
    <property type="match status" value="1"/>
</dbReference>
<dbReference type="SMART" id="SM00744">
    <property type="entry name" value="RINGv"/>
    <property type="match status" value="1"/>
</dbReference>
<dbReference type="SUPFAM" id="SSF57850">
    <property type="entry name" value="RING/U-box"/>
    <property type="match status" value="1"/>
</dbReference>
<dbReference type="PROSITE" id="PS51292">
    <property type="entry name" value="ZF_RING_CH"/>
    <property type="match status" value="1"/>
</dbReference>
<proteinExistence type="evidence at transcript level"/>
<protein>
    <recommendedName>
        <fullName>E3 ubiquitin-protein ligase MARCHF7</fullName>
        <ecNumber>2.3.2.27</ecNumber>
    </recommendedName>
    <alternativeName>
        <fullName>Membrane-associated RING finger protein 7</fullName>
    </alternativeName>
    <alternativeName>
        <fullName>Membrane-associated RING-CH protein VII</fullName>
        <shortName>MARCH-VII</shortName>
    </alternativeName>
    <alternativeName>
        <fullName evidence="5">RING-type E3 ubiquitin transferase MARCHF7</fullName>
    </alternativeName>
</protein>
<organism>
    <name type="scientific">Pongo abelii</name>
    <name type="common">Sumatran orangutan</name>
    <name type="synonym">Pongo pygmaeus abelii</name>
    <dbReference type="NCBI Taxonomy" id="9601"/>
    <lineage>
        <taxon>Eukaryota</taxon>
        <taxon>Metazoa</taxon>
        <taxon>Chordata</taxon>
        <taxon>Craniata</taxon>
        <taxon>Vertebrata</taxon>
        <taxon>Euteleostomi</taxon>
        <taxon>Mammalia</taxon>
        <taxon>Eutheria</taxon>
        <taxon>Euarchontoglires</taxon>
        <taxon>Primates</taxon>
        <taxon>Haplorrhini</taxon>
        <taxon>Catarrhini</taxon>
        <taxon>Hominidae</taxon>
        <taxon>Pongo</taxon>
    </lineage>
</organism>
<reference key="1">
    <citation type="submission" date="2004-11" db="EMBL/GenBank/DDBJ databases">
        <authorList>
            <consortium name="The German cDNA consortium"/>
        </authorList>
    </citation>
    <scope>NUCLEOTIDE SEQUENCE [LARGE SCALE MRNA]</scope>
    <source>
        <tissue>Heart</tissue>
    </source>
</reference>
<comment type="function">
    <text evidence="1 2">E3 ubiquitin-protein ligase which may specifically enhance the E2 activity of HIP2. E3 ubiquitin ligases accept ubiquitin from an E2 ubiquitin-conjugating enzyme in the form of a thioester and then directly transfer the ubiquitin to targeted substrates (By similarity). May be involved in T-cell proliferation by regulating LIF secretion (By similarity). May play a role in lysosome homeostasis. Promotes 'Lys-6', 'Lys-11' and 'Lys-63'-linked mixed polyubiquitination on ATG14 leading to the inhibition of autophagy by impairing the interaction between ATG14 and STX7. Participates in the dopamine-mediated negative regulation of the NLRP3 inflammasome by promoting its uibiquitination and subsequent degradation (By similarity).</text>
</comment>
<comment type="catalytic activity">
    <reaction evidence="1">
        <text>S-ubiquitinyl-[E2 ubiquitin-conjugating enzyme]-L-cysteine + [acceptor protein]-L-lysine = [E2 ubiquitin-conjugating enzyme]-L-cysteine + N(6)-ubiquitinyl-[acceptor protein]-L-lysine.</text>
        <dbReference type="EC" id="2.3.2.27"/>
    </reaction>
</comment>
<comment type="pathway">
    <text>Protein modification; protein ubiquitination.</text>
</comment>
<comment type="subcellular location">
    <subcellularLocation>
        <location evidence="1">Cytoplasm</location>
    </subcellularLocation>
</comment>
<comment type="domain">
    <text evidence="3">The RING-CH-type zinc finger domain is required for E3 ligase activity.</text>
</comment>
<feature type="chain" id="PRO_0000274417" description="E3 ubiquitin-protein ligase MARCHF7">
    <location>
        <begin position="1"/>
        <end position="707"/>
    </location>
</feature>
<feature type="zinc finger region" description="RING-CH-type" evidence="3">
    <location>
        <begin position="544"/>
        <end position="614"/>
    </location>
</feature>
<feature type="region of interest" description="Disordered" evidence="4">
    <location>
        <begin position="1"/>
        <end position="126"/>
    </location>
</feature>
<feature type="region of interest" description="Disordered" evidence="4">
    <location>
        <begin position="157"/>
        <end position="279"/>
    </location>
</feature>
<feature type="region of interest" description="Disordered" evidence="4">
    <location>
        <begin position="294"/>
        <end position="343"/>
    </location>
</feature>
<feature type="region of interest" description="Disordered" evidence="4">
    <location>
        <begin position="361"/>
        <end position="425"/>
    </location>
</feature>
<feature type="region of interest" description="Disordered" evidence="4">
    <location>
        <begin position="444"/>
        <end position="473"/>
    </location>
</feature>
<feature type="compositionally biased region" description="Low complexity" evidence="4">
    <location>
        <begin position="17"/>
        <end position="33"/>
    </location>
</feature>
<feature type="compositionally biased region" description="Basic and acidic residues" evidence="4">
    <location>
        <begin position="37"/>
        <end position="48"/>
    </location>
</feature>
<feature type="compositionally biased region" description="Low complexity" evidence="4">
    <location>
        <begin position="52"/>
        <end position="65"/>
    </location>
</feature>
<feature type="compositionally biased region" description="Polar residues" evidence="4">
    <location>
        <begin position="66"/>
        <end position="83"/>
    </location>
</feature>
<feature type="compositionally biased region" description="Polar residues" evidence="4">
    <location>
        <begin position="95"/>
        <end position="126"/>
    </location>
</feature>
<feature type="compositionally biased region" description="Polar residues" evidence="4">
    <location>
        <begin position="189"/>
        <end position="212"/>
    </location>
</feature>
<feature type="compositionally biased region" description="Polar residues" evidence="4">
    <location>
        <begin position="254"/>
        <end position="270"/>
    </location>
</feature>
<feature type="compositionally biased region" description="Low complexity" evidence="4">
    <location>
        <begin position="294"/>
        <end position="303"/>
    </location>
</feature>
<feature type="compositionally biased region" description="Polar residues" evidence="4">
    <location>
        <begin position="304"/>
        <end position="336"/>
    </location>
</feature>
<feature type="compositionally biased region" description="Polar residues" evidence="4">
    <location>
        <begin position="373"/>
        <end position="392"/>
    </location>
</feature>
<feature type="compositionally biased region" description="Polar residues" evidence="4">
    <location>
        <begin position="412"/>
        <end position="421"/>
    </location>
</feature>
<feature type="compositionally biased region" description="Low complexity" evidence="4">
    <location>
        <begin position="444"/>
        <end position="470"/>
    </location>
</feature>
<feature type="binding site" evidence="3">
    <location>
        <position position="552"/>
    </location>
    <ligand>
        <name>Zn(2+)</name>
        <dbReference type="ChEBI" id="CHEBI:29105"/>
        <label>1</label>
    </ligand>
</feature>
<feature type="binding site" evidence="3">
    <location>
        <position position="555"/>
    </location>
    <ligand>
        <name>Zn(2+)</name>
        <dbReference type="ChEBI" id="CHEBI:29105"/>
        <label>1</label>
    </ligand>
</feature>
<feature type="binding site" evidence="3">
    <location>
        <position position="570"/>
    </location>
    <ligand>
        <name>Zn(2+)</name>
        <dbReference type="ChEBI" id="CHEBI:29105"/>
        <label>2</label>
    </ligand>
</feature>
<feature type="binding site" evidence="3">
    <location>
        <position position="572"/>
    </location>
    <ligand>
        <name>Zn(2+)</name>
        <dbReference type="ChEBI" id="CHEBI:29105"/>
        <label>2</label>
    </ligand>
</feature>
<feature type="binding site" evidence="3">
    <location>
        <position position="580"/>
    </location>
    <ligand>
        <name>Zn(2+)</name>
        <dbReference type="ChEBI" id="CHEBI:29105"/>
        <label>1</label>
    </ligand>
</feature>
<feature type="binding site" evidence="3">
    <location>
        <position position="583"/>
    </location>
    <ligand>
        <name>Zn(2+)</name>
        <dbReference type="ChEBI" id="CHEBI:29105"/>
        <label>1</label>
    </ligand>
</feature>
<feature type="binding site" evidence="3">
    <location>
        <position position="604"/>
    </location>
    <ligand>
        <name>Zn(2+)</name>
        <dbReference type="ChEBI" id="CHEBI:29105"/>
        <label>2</label>
    </ligand>
</feature>
<feature type="binding site" evidence="3">
    <location>
        <position position="607"/>
    </location>
    <ligand>
        <name>Zn(2+)</name>
        <dbReference type="ChEBI" id="CHEBI:29105"/>
        <label>2</label>
    </ligand>
</feature>
<feature type="modified residue" description="N-acetylmethionine" evidence="1">
    <location>
        <position position="1"/>
    </location>
</feature>
<feature type="modified residue" description="Phosphoserine" evidence="1">
    <location>
        <position position="317"/>
    </location>
</feature>
<feature type="modified residue" description="Phosphoserine" evidence="1">
    <location>
        <position position="389"/>
    </location>
</feature>
<feature type="modified residue" description="Phosphothreonine" evidence="1">
    <location>
        <position position="686"/>
    </location>
</feature>
<feature type="modified residue" description="Phosphoserine" evidence="1">
    <location>
        <position position="687"/>
    </location>
</feature>
<feature type="modified residue" description="Phosphoserine" evidence="1">
    <location>
        <position position="691"/>
    </location>
</feature>
<name>MARH7_PONAB</name>
<gene>
    <name type="primary">MARCHF7</name>
    <name type="synonym">MARCH7</name>
</gene>